<keyword id="KW-0687">Ribonucleoprotein</keyword>
<keyword id="KW-0689">Ribosomal protein</keyword>
<keyword id="KW-0694">RNA-binding</keyword>
<keyword id="KW-0699">rRNA-binding</keyword>
<keyword id="KW-0820">tRNA-binding</keyword>
<organism>
    <name type="scientific">Bordetella bronchiseptica (strain ATCC BAA-588 / NCTC 13252 / RB50)</name>
    <name type="common">Alcaligenes bronchisepticus</name>
    <dbReference type="NCBI Taxonomy" id="257310"/>
    <lineage>
        <taxon>Bacteria</taxon>
        <taxon>Pseudomonadati</taxon>
        <taxon>Pseudomonadota</taxon>
        <taxon>Betaproteobacteria</taxon>
        <taxon>Burkholderiales</taxon>
        <taxon>Alcaligenaceae</taxon>
        <taxon>Bordetella</taxon>
    </lineage>
</organism>
<accession>Q7WRB8</accession>
<gene>
    <name evidence="1" type="primary">rplP</name>
    <name type="ordered locus">BB0036</name>
</gene>
<evidence type="ECO:0000255" key="1">
    <source>
        <dbReference type="HAMAP-Rule" id="MF_01342"/>
    </source>
</evidence>
<evidence type="ECO:0000256" key="2">
    <source>
        <dbReference type="SAM" id="MobiDB-lite"/>
    </source>
</evidence>
<evidence type="ECO:0000305" key="3"/>
<name>RL16_BORBR</name>
<protein>
    <recommendedName>
        <fullName evidence="1">Large ribosomal subunit protein uL16</fullName>
    </recommendedName>
    <alternativeName>
        <fullName evidence="3">50S ribosomal protein L16</fullName>
    </alternativeName>
</protein>
<comment type="function">
    <text evidence="1">Binds 23S rRNA and is also seen to make contacts with the A and possibly P site tRNAs.</text>
</comment>
<comment type="subunit">
    <text evidence="1">Part of the 50S ribosomal subunit.</text>
</comment>
<comment type="similarity">
    <text evidence="1">Belongs to the universal ribosomal protein uL16 family.</text>
</comment>
<dbReference type="EMBL" id="BX640437">
    <property type="protein sequence ID" value="CAE30538.1"/>
    <property type="molecule type" value="Genomic_DNA"/>
</dbReference>
<dbReference type="RefSeq" id="WP_003806911.1">
    <property type="nucleotide sequence ID" value="NC_002927.3"/>
</dbReference>
<dbReference type="SMR" id="Q7WRB8"/>
<dbReference type="GeneID" id="93206265"/>
<dbReference type="KEGG" id="bbr:BB0036"/>
<dbReference type="eggNOG" id="COG0197">
    <property type="taxonomic scope" value="Bacteria"/>
</dbReference>
<dbReference type="HOGENOM" id="CLU_078858_2_1_4"/>
<dbReference type="Proteomes" id="UP000001027">
    <property type="component" value="Chromosome"/>
</dbReference>
<dbReference type="GO" id="GO:0022625">
    <property type="term" value="C:cytosolic large ribosomal subunit"/>
    <property type="evidence" value="ECO:0007669"/>
    <property type="project" value="TreeGrafter"/>
</dbReference>
<dbReference type="GO" id="GO:0019843">
    <property type="term" value="F:rRNA binding"/>
    <property type="evidence" value="ECO:0007669"/>
    <property type="project" value="UniProtKB-UniRule"/>
</dbReference>
<dbReference type="GO" id="GO:0003735">
    <property type="term" value="F:structural constituent of ribosome"/>
    <property type="evidence" value="ECO:0007669"/>
    <property type="project" value="InterPro"/>
</dbReference>
<dbReference type="GO" id="GO:0000049">
    <property type="term" value="F:tRNA binding"/>
    <property type="evidence" value="ECO:0007669"/>
    <property type="project" value="UniProtKB-KW"/>
</dbReference>
<dbReference type="GO" id="GO:0006412">
    <property type="term" value="P:translation"/>
    <property type="evidence" value="ECO:0007669"/>
    <property type="project" value="UniProtKB-UniRule"/>
</dbReference>
<dbReference type="CDD" id="cd01433">
    <property type="entry name" value="Ribosomal_L16_L10e"/>
    <property type="match status" value="1"/>
</dbReference>
<dbReference type="FunFam" id="3.90.1170.10:FF:000001">
    <property type="entry name" value="50S ribosomal protein L16"/>
    <property type="match status" value="1"/>
</dbReference>
<dbReference type="Gene3D" id="3.90.1170.10">
    <property type="entry name" value="Ribosomal protein L10e/L16"/>
    <property type="match status" value="1"/>
</dbReference>
<dbReference type="HAMAP" id="MF_01342">
    <property type="entry name" value="Ribosomal_uL16"/>
    <property type="match status" value="1"/>
</dbReference>
<dbReference type="InterPro" id="IPR047873">
    <property type="entry name" value="Ribosomal_uL16"/>
</dbReference>
<dbReference type="InterPro" id="IPR000114">
    <property type="entry name" value="Ribosomal_uL16_bact-type"/>
</dbReference>
<dbReference type="InterPro" id="IPR020798">
    <property type="entry name" value="Ribosomal_uL16_CS"/>
</dbReference>
<dbReference type="InterPro" id="IPR016180">
    <property type="entry name" value="Ribosomal_uL16_dom"/>
</dbReference>
<dbReference type="InterPro" id="IPR036920">
    <property type="entry name" value="Ribosomal_uL16_sf"/>
</dbReference>
<dbReference type="NCBIfam" id="TIGR01164">
    <property type="entry name" value="rplP_bact"/>
    <property type="match status" value="1"/>
</dbReference>
<dbReference type="PANTHER" id="PTHR12220">
    <property type="entry name" value="50S/60S RIBOSOMAL PROTEIN L16"/>
    <property type="match status" value="1"/>
</dbReference>
<dbReference type="PANTHER" id="PTHR12220:SF13">
    <property type="entry name" value="LARGE RIBOSOMAL SUBUNIT PROTEIN UL16M"/>
    <property type="match status" value="1"/>
</dbReference>
<dbReference type="Pfam" id="PF00252">
    <property type="entry name" value="Ribosomal_L16"/>
    <property type="match status" value="1"/>
</dbReference>
<dbReference type="PRINTS" id="PR00060">
    <property type="entry name" value="RIBOSOMALL16"/>
</dbReference>
<dbReference type="SUPFAM" id="SSF54686">
    <property type="entry name" value="Ribosomal protein L16p/L10e"/>
    <property type="match status" value="1"/>
</dbReference>
<dbReference type="PROSITE" id="PS00586">
    <property type="entry name" value="RIBOSOMAL_L16_1"/>
    <property type="match status" value="1"/>
</dbReference>
<dbReference type="PROSITE" id="PS00701">
    <property type="entry name" value="RIBOSOMAL_L16_2"/>
    <property type="match status" value="1"/>
</dbReference>
<proteinExistence type="inferred from homology"/>
<sequence>MLQPSRRKYRKEQKGRNTGLASRGTHVSFGEFGLKATGRGRLTARQIEAARRAINRHIKRGGRIWIRIFPDKPISQKPAEVRMGNGKGNPEYWVAEIQPGKVLYEMEGVSEELAREAFRLAAAKLPISTTFVARHIGA</sequence>
<reference key="1">
    <citation type="journal article" date="2003" name="Nat. Genet.">
        <title>Comparative analysis of the genome sequences of Bordetella pertussis, Bordetella parapertussis and Bordetella bronchiseptica.</title>
        <authorList>
            <person name="Parkhill J."/>
            <person name="Sebaihia M."/>
            <person name="Preston A."/>
            <person name="Murphy L.D."/>
            <person name="Thomson N.R."/>
            <person name="Harris D.E."/>
            <person name="Holden M.T.G."/>
            <person name="Churcher C.M."/>
            <person name="Bentley S.D."/>
            <person name="Mungall K.L."/>
            <person name="Cerdeno-Tarraga A.-M."/>
            <person name="Temple L."/>
            <person name="James K.D."/>
            <person name="Harris B."/>
            <person name="Quail M.A."/>
            <person name="Achtman M."/>
            <person name="Atkin R."/>
            <person name="Baker S."/>
            <person name="Basham D."/>
            <person name="Bason N."/>
            <person name="Cherevach I."/>
            <person name="Chillingworth T."/>
            <person name="Collins M."/>
            <person name="Cronin A."/>
            <person name="Davis P."/>
            <person name="Doggett J."/>
            <person name="Feltwell T."/>
            <person name="Goble A."/>
            <person name="Hamlin N."/>
            <person name="Hauser H."/>
            <person name="Holroyd S."/>
            <person name="Jagels K."/>
            <person name="Leather S."/>
            <person name="Moule S."/>
            <person name="Norberczak H."/>
            <person name="O'Neil S."/>
            <person name="Ormond D."/>
            <person name="Price C."/>
            <person name="Rabbinowitsch E."/>
            <person name="Rutter S."/>
            <person name="Sanders M."/>
            <person name="Saunders D."/>
            <person name="Seeger K."/>
            <person name="Sharp S."/>
            <person name="Simmonds M."/>
            <person name="Skelton J."/>
            <person name="Squares R."/>
            <person name="Squares S."/>
            <person name="Stevens K."/>
            <person name="Unwin L."/>
            <person name="Whitehead S."/>
            <person name="Barrell B.G."/>
            <person name="Maskell D.J."/>
        </authorList>
    </citation>
    <scope>NUCLEOTIDE SEQUENCE [LARGE SCALE GENOMIC DNA]</scope>
    <source>
        <strain>ATCC BAA-588 / NCTC 13252 / RB50</strain>
    </source>
</reference>
<feature type="chain" id="PRO_0000062054" description="Large ribosomal subunit protein uL16">
    <location>
        <begin position="1"/>
        <end position="138"/>
    </location>
</feature>
<feature type="region of interest" description="Disordered" evidence="2">
    <location>
        <begin position="1"/>
        <end position="24"/>
    </location>
</feature>
<feature type="compositionally biased region" description="Basic residues" evidence="2">
    <location>
        <begin position="1"/>
        <end position="13"/>
    </location>
</feature>